<gene>
    <name type="primary">norC</name>
    <name type="ordered locus">Rsph17025_0970</name>
</gene>
<dbReference type="EMBL" id="AF000233">
    <property type="protein sequence ID" value="AAC45371.1"/>
    <property type="molecule type" value="Genomic_DNA"/>
</dbReference>
<dbReference type="EMBL" id="CP000661">
    <property type="protein sequence ID" value="ABP69871.1"/>
    <property type="molecule type" value="Genomic_DNA"/>
</dbReference>
<dbReference type="SMR" id="O06844"/>
<dbReference type="STRING" id="349102.Rsph17025_0970"/>
<dbReference type="KEGG" id="rsq:Rsph17025_0970"/>
<dbReference type="eggNOG" id="COG2010">
    <property type="taxonomic scope" value="Bacteria"/>
</dbReference>
<dbReference type="HOGENOM" id="CLU_135564_0_0_5"/>
<dbReference type="BioCyc" id="RSPH349102:G1G8M-995-MONOMER"/>
<dbReference type="GO" id="GO:0005886">
    <property type="term" value="C:plasma membrane"/>
    <property type="evidence" value="ECO:0007669"/>
    <property type="project" value="UniProtKB-SubCell"/>
</dbReference>
<dbReference type="GO" id="GO:0009055">
    <property type="term" value="F:electron transfer activity"/>
    <property type="evidence" value="ECO:0007669"/>
    <property type="project" value="InterPro"/>
</dbReference>
<dbReference type="GO" id="GO:0020037">
    <property type="term" value="F:heme binding"/>
    <property type="evidence" value="ECO:0007669"/>
    <property type="project" value="InterPro"/>
</dbReference>
<dbReference type="GO" id="GO:0046872">
    <property type="term" value="F:metal ion binding"/>
    <property type="evidence" value="ECO:0007669"/>
    <property type="project" value="UniProtKB-KW"/>
</dbReference>
<dbReference type="Gene3D" id="1.10.760.10">
    <property type="entry name" value="Cytochrome c-like domain"/>
    <property type="match status" value="1"/>
</dbReference>
<dbReference type="InterPro" id="IPR009056">
    <property type="entry name" value="Cyt_c-like_dom"/>
</dbReference>
<dbReference type="InterPro" id="IPR036909">
    <property type="entry name" value="Cyt_c-like_dom_sf"/>
</dbReference>
<dbReference type="Pfam" id="PF00034">
    <property type="entry name" value="Cytochrom_C"/>
    <property type="match status" value="1"/>
</dbReference>
<dbReference type="SUPFAM" id="SSF46626">
    <property type="entry name" value="Cytochrome c"/>
    <property type="match status" value="1"/>
</dbReference>
<dbReference type="PROSITE" id="PS51007">
    <property type="entry name" value="CYTC"/>
    <property type="match status" value="1"/>
</dbReference>
<organism>
    <name type="scientific">Cereibacter sphaeroides (strain ATCC 17025 / ATH 2.4.3)</name>
    <name type="common">Rhodobacter sphaeroides</name>
    <dbReference type="NCBI Taxonomy" id="349102"/>
    <lineage>
        <taxon>Bacteria</taxon>
        <taxon>Pseudomonadati</taxon>
        <taxon>Pseudomonadota</taxon>
        <taxon>Alphaproteobacteria</taxon>
        <taxon>Rhodobacterales</taxon>
        <taxon>Paracoccaceae</taxon>
        <taxon>Cereibacter</taxon>
    </lineage>
</organism>
<reference key="1">
    <citation type="journal article" date="1997" name="J. Bacteriol.">
        <title>Characterization of the nitric oxide reductase-encoding region in Rhodobacter sphaeroides 2.4.3.</title>
        <authorList>
            <person name="Bartnikas T.B."/>
            <person name="Tosques I.E."/>
            <person name="Laratta W.P."/>
            <person name="Shi J."/>
            <person name="Shapleigh J.P."/>
        </authorList>
    </citation>
    <scope>NUCLEOTIDE SEQUENCE [GENOMIC DNA]</scope>
</reference>
<reference key="2">
    <citation type="submission" date="2007-04" db="EMBL/GenBank/DDBJ databases">
        <title>Complete sequence of chromosome of Rhodobacter sphaeroides ATCC 17025.</title>
        <authorList>
            <consortium name="US DOE Joint Genome Institute"/>
            <person name="Copeland A."/>
            <person name="Lucas S."/>
            <person name="Lapidus A."/>
            <person name="Barry K."/>
            <person name="Detter J.C."/>
            <person name="Glavina del Rio T."/>
            <person name="Hammon N."/>
            <person name="Israni S."/>
            <person name="Dalin E."/>
            <person name="Tice H."/>
            <person name="Pitluck S."/>
            <person name="Chertkov O."/>
            <person name="Brettin T."/>
            <person name="Bruce D."/>
            <person name="Han C."/>
            <person name="Schmutz J."/>
            <person name="Larimer F."/>
            <person name="Land M."/>
            <person name="Hauser L."/>
            <person name="Kyrpides N."/>
            <person name="Kim E."/>
            <person name="Richardson P."/>
            <person name="Mackenzie C."/>
            <person name="Choudhary M."/>
            <person name="Donohue T.J."/>
            <person name="Kaplan S."/>
        </authorList>
    </citation>
    <scope>NUCLEOTIDE SEQUENCE [LARGE SCALE GENOMIC DNA]</scope>
    <source>
        <strain>ATCC 17025 / ATH 2.4.3</strain>
    </source>
</reference>
<evidence type="ECO:0000250" key="1"/>
<evidence type="ECO:0000255" key="2"/>
<evidence type="ECO:0000255" key="3">
    <source>
        <dbReference type="PROSITE-ProRule" id="PRU00433"/>
    </source>
</evidence>
<evidence type="ECO:0000305" key="4"/>
<comment type="function">
    <text>Component of the anaerobic respiratory chain that transforms nitrate to dinitrogen (denitrification).</text>
</comment>
<comment type="subunit">
    <text evidence="1">Heterodimer of cytochromes b (large subunit) and c (small subunit).</text>
</comment>
<comment type="subcellular location">
    <subcellularLocation>
        <location evidence="1">Cell membrane</location>
        <topology evidence="1">Single-pass membrane protein</topology>
    </subcellularLocation>
    <text evidence="1">May be attached to the membrane by a signal-anchor.</text>
</comment>
<proteinExistence type="inferred from homology"/>
<feature type="initiator methionine" description="Removed" evidence="1">
    <location>
        <position position="1"/>
    </location>
</feature>
<feature type="chain" id="PRO_0000108426" description="Nitric oxide reductase subunit C">
    <location>
        <begin position="2"/>
        <end position="147"/>
    </location>
</feature>
<feature type="transmembrane region" description="Helical; Signal-anchor" evidence="2">
    <location>
        <begin position="13"/>
        <end position="29"/>
    </location>
</feature>
<feature type="binding site" description="covalent" evidence="3">
    <location>
        <position position="59"/>
    </location>
    <ligand>
        <name>heme c</name>
        <dbReference type="ChEBI" id="CHEBI:61717"/>
    </ligand>
</feature>
<feature type="binding site" description="covalent" evidence="3">
    <location>
        <position position="62"/>
    </location>
    <ligand>
        <name>heme c</name>
        <dbReference type="ChEBI" id="CHEBI:61717"/>
    </ligand>
</feature>
<feature type="binding site" description="axial binding residue" evidence="3">
    <location>
        <position position="63"/>
    </location>
    <ligand>
        <name>heme c</name>
        <dbReference type="ChEBI" id="CHEBI:61717"/>
    </ligand>
    <ligandPart>
        <name>Fe</name>
        <dbReference type="ChEBI" id="CHEBI:18248"/>
    </ligandPart>
</feature>
<feature type="sequence conflict" description="In Ref. 1; AAC45371." evidence="4" ref="1">
    <original>QP</original>
    <variation>HA</variation>
    <location>
        <begin position="103"/>
        <end position="104"/>
    </location>
</feature>
<accession>O06844</accession>
<accession>A4WR57</accession>
<keyword id="KW-1003">Cell membrane</keyword>
<keyword id="KW-0249">Electron transport</keyword>
<keyword id="KW-0349">Heme</keyword>
<keyword id="KW-0408">Iron</keyword>
<keyword id="KW-0472">Membrane</keyword>
<keyword id="KW-0479">Metal-binding</keyword>
<keyword id="KW-0679">Respiratory chain</keyword>
<keyword id="KW-0735">Signal-anchor</keyword>
<keyword id="KW-0812">Transmembrane</keyword>
<keyword id="KW-1133">Transmembrane helix</keyword>
<keyword id="KW-0813">Transport</keyword>
<sequence>MSEILTKSRARNVFYGGSLFFIAVFVGLTVQSHNYVVSTTPALTDEVILGKHVWERNSCINCHTLHGEGAYFAPEVGNVMTRWGVLDDPDAAAEMLGGWMDAQPSGVEGRRQMPHFELTDEEKRGLSEFLRWADQMNTQSWPPNDAG</sequence>
<name>NORC_CERS5</name>
<protein>
    <recommendedName>
        <fullName>Nitric oxide reductase subunit C</fullName>
    </recommendedName>
    <alternativeName>
        <fullName>NOR small subunit</fullName>
    </alternativeName>
    <alternativeName>
        <fullName>Nitric oxide reductase cytochrome c subunit</fullName>
    </alternativeName>
</protein>